<accession>P11299</accession>
<organism>
    <name type="scientific">Bos taurus papillomavirus 2</name>
    <name type="common">Bovine papillomavirus 2</name>
    <dbReference type="NCBI Taxonomy" id="2758382"/>
    <lineage>
        <taxon>Viruses</taxon>
        <taxon>Monodnaviria</taxon>
        <taxon>Shotokuvirae</taxon>
        <taxon>Cossaviricota</taxon>
        <taxon>Papovaviricetes</taxon>
        <taxon>Zurhausenvirales</taxon>
        <taxon>Papillomaviridae</taxon>
        <taxon>Firstpapillomavirinae</taxon>
        <taxon>Deltapapillomavirus</taxon>
        <taxon>Bovine papillomavirus type 1</taxon>
    </lineage>
</organism>
<comment type="function">
    <text evidence="1">Plays a role in the initiation of viral DNA replication. A dimer of E2 interacts with a dimer of E1 in order to improve specificity of E1 DNA binding activity. Once the complex recognizes and binds DNA at specific sites, the E2 dimer is removed from DNA. E2 also regulates viral transcription through binding to the E2RE response element (5'-ACCNNNNNNGGT-3') present in multiple copies in the regulatory regions of the viral genome. Activates or represses transcription depending on E2RE's position with regards to proximal promoter elements including the TATA-box. Repression occurs by sterically hindering the assembly of the transcription initiation complex.</text>
</comment>
<comment type="subunit">
    <text evidence="1">Binds DNA as homodimer. Interacts with protein E1; this interaction greatly increases E1 DNA-binding activity. Interacts with protein L1; this interaction enhances E2-dependent replication and transcription activation. Interacts with protein L2; this interaction inhibits E2 transcriptional activity but not DNA replication function E2. Interacts with protein E7; this interaction inhibits E7 oncogenic activity. Interacts with host TAF1; this interaction modulates E2-dependent transcriptional regulation. Interacts with host BRD4; this interaction mediates E2 transcriptional activation function. Additionally, the interaction with host BRD4 on mitotic chromosomes mediates tethering of the viral genome. Interacts with host TOPBP1; this interaction is required for optimal viral DNA replication.</text>
</comment>
<comment type="subcellular location">
    <subcellularLocation>
        <location evidence="1">Host nucleus</location>
    </subcellularLocation>
</comment>
<comment type="PTM">
    <text evidence="1">Phosphorylated.</text>
</comment>
<comment type="similarity">
    <text evidence="1">Belongs to the papillomaviridae E2 protein family.</text>
</comment>
<proteinExistence type="inferred from homology"/>
<name>VE2_BPV2</name>
<evidence type="ECO:0000255" key="1">
    <source>
        <dbReference type="HAMAP-Rule" id="MF_04001"/>
    </source>
</evidence>
<evidence type="ECO:0000256" key="2">
    <source>
        <dbReference type="SAM" id="MobiDB-lite"/>
    </source>
</evidence>
<keyword id="KW-0010">Activator</keyword>
<keyword id="KW-0235">DNA replication</keyword>
<keyword id="KW-0238">DNA-binding</keyword>
<keyword id="KW-0244">Early protein</keyword>
<keyword id="KW-1048">Host nucleus</keyword>
<keyword id="KW-0597">Phosphoprotein</keyword>
<keyword id="KW-0678">Repressor</keyword>
<keyword id="KW-0804">Transcription</keyword>
<keyword id="KW-0805">Transcription regulation</keyword>
<organismHost>
    <name type="scientific">Bos taurus</name>
    <name type="common">Bovine</name>
    <dbReference type="NCBI Taxonomy" id="9913"/>
</organismHost>
<sequence length="411" mass="45411">METACERLHVAQETQMQLIEKASDKLQDHILYWTAVRTENTLLYAARKKGVTVLGHCRVPHSVVCQERAKQAIEMQLSLQELSKTEFGNEPWCLLDTSWDRYMSEPKRCFKKGARVVEVEFDGNASNTNWYTVYSKLYMRTEDGWQLAKAGADGTGLYYCTMAGAGRIYYSRFGEEAARFSTTGHYSVRDQDRVYAGVSSTSSDFRDRPDGVSASEGPEGDPAGKEAEPAQPVSSLLGSPACVPIRAGLGWVRDGPRPHPYHFPAGSGGSLLRSASTPVQGPVPVDLAPRQEEEENQSPDSTEEEPVTVPRHTSDADGFHLLKAGQSCFALISGSANQVKCYRFRVKKNHRHRYENCTTTSFTVADNGAERQGQAQILITFGSPGQRQDFLKHVPLPPGMNISGFTASLDF</sequence>
<dbReference type="EMBL" id="M20219">
    <property type="protein sequence ID" value="AAA66835.1"/>
    <property type="molecule type" value="Genomic_DNA"/>
</dbReference>
<dbReference type="PIR" id="D31169">
    <property type="entry name" value="W2WLB2"/>
</dbReference>
<dbReference type="SMR" id="P11299"/>
<dbReference type="Proteomes" id="UP000007612">
    <property type="component" value="Segment"/>
</dbReference>
<dbReference type="GO" id="GO:0042025">
    <property type="term" value="C:host cell nucleus"/>
    <property type="evidence" value="ECO:0007669"/>
    <property type="project" value="UniProtKB-SubCell"/>
</dbReference>
<dbReference type="GO" id="GO:0003677">
    <property type="term" value="F:DNA binding"/>
    <property type="evidence" value="ECO:0007669"/>
    <property type="project" value="UniProtKB-UniRule"/>
</dbReference>
<dbReference type="GO" id="GO:0003700">
    <property type="term" value="F:DNA-binding transcription factor activity"/>
    <property type="evidence" value="ECO:0007669"/>
    <property type="project" value="UniProtKB-UniRule"/>
</dbReference>
<dbReference type="GO" id="GO:0000166">
    <property type="term" value="F:nucleotide binding"/>
    <property type="evidence" value="ECO:0007669"/>
    <property type="project" value="UniProtKB-UniRule"/>
</dbReference>
<dbReference type="GO" id="GO:0006260">
    <property type="term" value="P:DNA replication"/>
    <property type="evidence" value="ECO:0007669"/>
    <property type="project" value="UniProtKB-KW"/>
</dbReference>
<dbReference type="GO" id="GO:0006351">
    <property type="term" value="P:DNA-templated transcription"/>
    <property type="evidence" value="ECO:0007669"/>
    <property type="project" value="UniProtKB-UniRule"/>
</dbReference>
<dbReference type="GO" id="GO:0006275">
    <property type="term" value="P:regulation of DNA replication"/>
    <property type="evidence" value="ECO:0007669"/>
    <property type="project" value="UniProtKB-UniRule"/>
</dbReference>
<dbReference type="GO" id="GO:0039693">
    <property type="term" value="P:viral DNA genome replication"/>
    <property type="evidence" value="ECO:0007669"/>
    <property type="project" value="UniProtKB-UniRule"/>
</dbReference>
<dbReference type="Gene3D" id="3.30.70.330">
    <property type="match status" value="1"/>
</dbReference>
<dbReference type="Gene3D" id="1.10.287.30">
    <property type="entry name" value="E2 (early) protein, N terminal domain, subdomain 1"/>
    <property type="match status" value="1"/>
</dbReference>
<dbReference type="Gene3D" id="2.170.200.10">
    <property type="entry name" value="Papillomavirus E2 early protein domain"/>
    <property type="match status" value="1"/>
</dbReference>
<dbReference type="HAMAP" id="MF_04001">
    <property type="entry name" value="PPV_E2"/>
    <property type="match status" value="1"/>
</dbReference>
<dbReference type="InterPro" id="IPR035975">
    <property type="entry name" value="E2/EBNA1_C_sf"/>
</dbReference>
<dbReference type="InterPro" id="IPR012677">
    <property type="entry name" value="Nucleotide-bd_a/b_plait_sf"/>
</dbReference>
<dbReference type="InterPro" id="IPR000427">
    <property type="entry name" value="Papillomavirus_E2_C"/>
</dbReference>
<dbReference type="InterPro" id="IPR001866">
    <property type="entry name" value="PPV_E2_N"/>
</dbReference>
<dbReference type="InterPro" id="IPR033668">
    <property type="entry name" value="Reg_prot_E2"/>
</dbReference>
<dbReference type="InterPro" id="IPR036050">
    <property type="entry name" value="Regulatory_protein_E2_N"/>
</dbReference>
<dbReference type="InterPro" id="IPR042503">
    <property type="entry name" value="Regulatory_protein_E2_N_1"/>
</dbReference>
<dbReference type="InterPro" id="IPR042504">
    <property type="entry name" value="Regulatory_protein_E2_N_2"/>
</dbReference>
<dbReference type="Pfam" id="PF00511">
    <property type="entry name" value="PPV_E2_C"/>
    <property type="match status" value="1"/>
</dbReference>
<dbReference type="Pfam" id="PF00508">
    <property type="entry name" value="PPV_E2_N"/>
    <property type="match status" value="1"/>
</dbReference>
<dbReference type="SUPFAM" id="SSF51332">
    <property type="entry name" value="E2 regulatory, transactivation domain"/>
    <property type="match status" value="1"/>
</dbReference>
<dbReference type="SUPFAM" id="SSF54957">
    <property type="entry name" value="Viral DNA-binding domain"/>
    <property type="match status" value="1"/>
</dbReference>
<gene>
    <name evidence="1" type="primary">E2</name>
</gene>
<protein>
    <recommendedName>
        <fullName evidence="1">Regulatory protein E2</fullName>
    </recommendedName>
</protein>
<reference key="1">
    <citation type="submission" date="1988-05" db="EMBL/GenBank/DDBJ databases">
        <authorList>
            <person name="Groff D.E."/>
            <person name="Mitra R."/>
            <person name="Lancaster W.D."/>
        </authorList>
    </citation>
    <scope>NUCLEOTIDE SEQUENCE [GENOMIC DNA]</scope>
</reference>
<feature type="chain" id="PRO_0000133173" description="Regulatory protein E2">
    <location>
        <begin position="1"/>
        <end position="411"/>
    </location>
</feature>
<feature type="region of interest" description="Transactivation domain" evidence="1">
    <location>
        <begin position="1"/>
        <end position="202"/>
    </location>
</feature>
<feature type="region of interest" description="Disordered" evidence="2">
    <location>
        <begin position="197"/>
        <end position="237"/>
    </location>
</feature>
<feature type="region of interest" description="Disordered" evidence="2">
    <location>
        <begin position="260"/>
        <end position="314"/>
    </location>
</feature>
<feature type="region of interest" description="DNA-binding domain" evidence="1">
    <location>
        <begin position="326"/>
        <end position="411"/>
    </location>
</feature>
<feature type="compositionally biased region" description="Acidic residues" evidence="2">
    <location>
        <begin position="292"/>
        <end position="306"/>
    </location>
</feature>